<reference key="1">
    <citation type="submission" date="2008-10" db="EMBL/GenBank/DDBJ databases">
        <title>Genome sequence of Bacillus cereus B4264.</title>
        <authorList>
            <person name="Dodson R.J."/>
            <person name="Durkin A.S."/>
            <person name="Rosovitz M.J."/>
            <person name="Rasko D.A."/>
            <person name="Hoffmaster A."/>
            <person name="Ravel J."/>
            <person name="Sutton G."/>
        </authorList>
    </citation>
    <scope>NUCLEOTIDE SEQUENCE [LARGE SCALE GENOMIC DNA]</scope>
    <source>
        <strain>B4264</strain>
    </source>
</reference>
<dbReference type="EMBL" id="CP001176">
    <property type="protein sequence ID" value="ACK60074.1"/>
    <property type="molecule type" value="Genomic_DNA"/>
</dbReference>
<dbReference type="RefSeq" id="WP_000135694.1">
    <property type="nucleotide sequence ID" value="NZ_VEHB01000002.1"/>
</dbReference>
<dbReference type="SMR" id="B7H6T6"/>
<dbReference type="KEGG" id="bcb:BCB4264_A4052"/>
<dbReference type="HOGENOM" id="CLU_160493_1_0_9"/>
<dbReference type="Proteomes" id="UP000007096">
    <property type="component" value="Chromosome"/>
</dbReference>
<dbReference type="Gene3D" id="1.10.287.750">
    <property type="entry name" value="SO2669-like"/>
    <property type="match status" value="1"/>
</dbReference>
<dbReference type="HAMAP" id="MF_01560">
    <property type="entry name" value="UPF0358"/>
    <property type="match status" value="1"/>
</dbReference>
<dbReference type="InterPro" id="IPR009983">
    <property type="entry name" value="UPF0358"/>
</dbReference>
<dbReference type="InterPro" id="IPR036270">
    <property type="entry name" value="UPF0358_sf"/>
</dbReference>
<dbReference type="NCBIfam" id="NF010187">
    <property type="entry name" value="PRK13666.1"/>
    <property type="match status" value="1"/>
</dbReference>
<dbReference type="Pfam" id="PF07408">
    <property type="entry name" value="DUF1507"/>
    <property type="match status" value="1"/>
</dbReference>
<dbReference type="SUPFAM" id="SSF140404">
    <property type="entry name" value="EF2458-like"/>
    <property type="match status" value="1"/>
</dbReference>
<accession>B7H6T6</accession>
<name>Y4052_BACC4</name>
<feature type="chain" id="PRO_1000199628" description="UPF0358 protein BCB4264_A4052">
    <location>
        <begin position="1"/>
        <end position="95"/>
    </location>
</feature>
<organism>
    <name type="scientific">Bacillus cereus (strain B4264)</name>
    <dbReference type="NCBI Taxonomy" id="405532"/>
    <lineage>
        <taxon>Bacteria</taxon>
        <taxon>Bacillati</taxon>
        <taxon>Bacillota</taxon>
        <taxon>Bacilli</taxon>
        <taxon>Bacillales</taxon>
        <taxon>Bacillaceae</taxon>
        <taxon>Bacillus</taxon>
        <taxon>Bacillus cereus group</taxon>
    </lineage>
</organism>
<comment type="similarity">
    <text evidence="1">Belongs to the UPF0358 family.</text>
</comment>
<gene>
    <name type="ordered locus">BCB4264_A4052</name>
</gene>
<protein>
    <recommendedName>
        <fullName evidence="1">UPF0358 protein BCB4264_A4052</fullName>
    </recommendedName>
</protein>
<evidence type="ECO:0000255" key="1">
    <source>
        <dbReference type="HAMAP-Rule" id="MF_01560"/>
    </source>
</evidence>
<proteinExistence type="inferred from homology"/>
<sequence length="95" mass="10724">MASETVANHQEKALALLQADAEKILRLIKVQMDHLTMPQCPLYEEVLDTQMFGLSREVDFAVRLGLIAEEQGKAMLGELERELSALHEAFTNKQQ</sequence>